<comment type="function">
    <text evidence="1">Involved in the regulation of glutamine synthetase GlnA, a key enzyme in the process to assimilate ammonia. When cellular nitrogen levels are high, the C-terminal adenylyl transferase (AT) inactivates GlnA by covalent transfer of an adenylyl group from ATP to specific tyrosine residue of GlnA, thus reducing its activity. Conversely, when nitrogen levels are low, the N-terminal adenylyl removase (AR) activates GlnA by removing the adenylyl group by phosphorolysis, increasing its activity. The regulatory region of GlnE binds the signal transduction protein PII (GlnB) which indicates the nitrogen status of the cell.</text>
</comment>
<comment type="catalytic activity">
    <reaction evidence="1">
        <text>[glutamine synthetase]-O(4)-(5'-adenylyl)-L-tyrosine + phosphate = [glutamine synthetase]-L-tyrosine + ADP</text>
        <dbReference type="Rhea" id="RHEA:43716"/>
        <dbReference type="Rhea" id="RHEA-COMP:10660"/>
        <dbReference type="Rhea" id="RHEA-COMP:10661"/>
        <dbReference type="ChEBI" id="CHEBI:43474"/>
        <dbReference type="ChEBI" id="CHEBI:46858"/>
        <dbReference type="ChEBI" id="CHEBI:83624"/>
        <dbReference type="ChEBI" id="CHEBI:456216"/>
        <dbReference type="EC" id="2.7.7.89"/>
    </reaction>
</comment>
<comment type="catalytic activity">
    <reaction evidence="1">
        <text>[glutamine synthetase]-L-tyrosine + ATP = [glutamine synthetase]-O(4)-(5'-adenylyl)-L-tyrosine + diphosphate</text>
        <dbReference type="Rhea" id="RHEA:18589"/>
        <dbReference type="Rhea" id="RHEA-COMP:10660"/>
        <dbReference type="Rhea" id="RHEA-COMP:10661"/>
        <dbReference type="ChEBI" id="CHEBI:30616"/>
        <dbReference type="ChEBI" id="CHEBI:33019"/>
        <dbReference type="ChEBI" id="CHEBI:46858"/>
        <dbReference type="ChEBI" id="CHEBI:83624"/>
        <dbReference type="EC" id="2.7.7.42"/>
    </reaction>
</comment>
<comment type="cofactor">
    <cofactor evidence="1">
        <name>Mg(2+)</name>
        <dbReference type="ChEBI" id="CHEBI:18420"/>
    </cofactor>
</comment>
<comment type="similarity">
    <text evidence="1">Belongs to the GlnE family.</text>
</comment>
<organism>
    <name type="scientific">Xanthobacter autotrophicus (strain ATCC BAA-1158 / Py2)</name>
    <dbReference type="NCBI Taxonomy" id="78245"/>
    <lineage>
        <taxon>Bacteria</taxon>
        <taxon>Pseudomonadati</taxon>
        <taxon>Pseudomonadota</taxon>
        <taxon>Alphaproteobacteria</taxon>
        <taxon>Hyphomicrobiales</taxon>
        <taxon>Xanthobacteraceae</taxon>
        <taxon>Xanthobacter</taxon>
    </lineage>
</organism>
<dbReference type="EC" id="2.7.7.89" evidence="1"/>
<dbReference type="EC" id="2.7.7.42" evidence="1"/>
<dbReference type="EMBL" id="CP000781">
    <property type="protein sequence ID" value="ABS68748.1"/>
    <property type="molecule type" value="Genomic_DNA"/>
</dbReference>
<dbReference type="SMR" id="A7IL55"/>
<dbReference type="STRING" id="78245.Xaut_3519"/>
<dbReference type="KEGG" id="xau:Xaut_3519"/>
<dbReference type="eggNOG" id="COG1391">
    <property type="taxonomic scope" value="Bacteria"/>
</dbReference>
<dbReference type="HOGENOM" id="CLU_006233_0_0_5"/>
<dbReference type="OrthoDB" id="9759366at2"/>
<dbReference type="PhylomeDB" id="A7IL55"/>
<dbReference type="Proteomes" id="UP000002417">
    <property type="component" value="Chromosome"/>
</dbReference>
<dbReference type="GO" id="GO:0005829">
    <property type="term" value="C:cytosol"/>
    <property type="evidence" value="ECO:0007669"/>
    <property type="project" value="TreeGrafter"/>
</dbReference>
<dbReference type="GO" id="GO:0008882">
    <property type="term" value="F:[glutamate-ammonia-ligase] adenylyltransferase activity"/>
    <property type="evidence" value="ECO:0007669"/>
    <property type="project" value="UniProtKB-UniRule"/>
</dbReference>
<dbReference type="GO" id="GO:0047388">
    <property type="term" value="F:[glutamine synthetase]-adenylyl-L-tyrosine phosphorylase activity"/>
    <property type="evidence" value="ECO:0007669"/>
    <property type="project" value="UniProtKB-EC"/>
</dbReference>
<dbReference type="GO" id="GO:0005524">
    <property type="term" value="F:ATP binding"/>
    <property type="evidence" value="ECO:0007669"/>
    <property type="project" value="UniProtKB-UniRule"/>
</dbReference>
<dbReference type="GO" id="GO:0000287">
    <property type="term" value="F:magnesium ion binding"/>
    <property type="evidence" value="ECO:0007669"/>
    <property type="project" value="UniProtKB-UniRule"/>
</dbReference>
<dbReference type="GO" id="GO:0000820">
    <property type="term" value="P:regulation of glutamine family amino acid metabolic process"/>
    <property type="evidence" value="ECO:0007669"/>
    <property type="project" value="UniProtKB-UniRule"/>
</dbReference>
<dbReference type="CDD" id="cd05401">
    <property type="entry name" value="NT_GlnE_GlnD_like"/>
    <property type="match status" value="2"/>
</dbReference>
<dbReference type="Gene3D" id="3.30.460.10">
    <property type="entry name" value="Beta Polymerase, domain 2"/>
    <property type="match status" value="2"/>
</dbReference>
<dbReference type="Gene3D" id="1.20.120.330">
    <property type="entry name" value="Nucleotidyltransferases domain 2"/>
    <property type="match status" value="2"/>
</dbReference>
<dbReference type="HAMAP" id="MF_00802">
    <property type="entry name" value="GlnE"/>
    <property type="match status" value="1"/>
</dbReference>
<dbReference type="InterPro" id="IPR023057">
    <property type="entry name" value="GlnE"/>
</dbReference>
<dbReference type="InterPro" id="IPR005190">
    <property type="entry name" value="GlnE_rpt_dom"/>
</dbReference>
<dbReference type="InterPro" id="IPR043519">
    <property type="entry name" value="NT_sf"/>
</dbReference>
<dbReference type="InterPro" id="IPR013546">
    <property type="entry name" value="PII_UdlTrfase/GS_AdlTrfase"/>
</dbReference>
<dbReference type="NCBIfam" id="NF008292">
    <property type="entry name" value="PRK11072.1"/>
    <property type="match status" value="1"/>
</dbReference>
<dbReference type="NCBIfam" id="NF010706">
    <property type="entry name" value="PRK14108.1"/>
    <property type="match status" value="1"/>
</dbReference>
<dbReference type="PANTHER" id="PTHR30621:SF0">
    <property type="entry name" value="BIFUNCTIONAL GLUTAMINE SYNTHETASE ADENYLYLTRANSFERASE_ADENYLYL-REMOVING ENZYME"/>
    <property type="match status" value="1"/>
</dbReference>
<dbReference type="PANTHER" id="PTHR30621">
    <property type="entry name" value="GLUTAMINE SYNTHETASE ADENYLYLTRANSFERASE"/>
    <property type="match status" value="1"/>
</dbReference>
<dbReference type="Pfam" id="PF08335">
    <property type="entry name" value="GlnD_UR_UTase"/>
    <property type="match status" value="2"/>
</dbReference>
<dbReference type="Pfam" id="PF03710">
    <property type="entry name" value="GlnE"/>
    <property type="match status" value="2"/>
</dbReference>
<dbReference type="SUPFAM" id="SSF81301">
    <property type="entry name" value="Nucleotidyltransferase"/>
    <property type="match status" value="2"/>
</dbReference>
<dbReference type="SUPFAM" id="SSF81593">
    <property type="entry name" value="Nucleotidyltransferase substrate binding subunit/domain"/>
    <property type="match status" value="2"/>
</dbReference>
<protein>
    <recommendedName>
        <fullName evidence="1">Bifunctional glutamine synthetase adenylyltransferase/adenylyl-removing enzyme</fullName>
    </recommendedName>
    <alternativeName>
        <fullName evidence="1">ATP:glutamine synthetase adenylyltransferase</fullName>
    </alternativeName>
    <alternativeName>
        <fullName evidence="1">ATase</fullName>
    </alternativeName>
    <domain>
        <recommendedName>
            <fullName evidence="1">Glutamine synthetase adenylyl-L-tyrosine phosphorylase</fullName>
            <ecNumber evidence="1">2.7.7.89</ecNumber>
        </recommendedName>
        <alternativeName>
            <fullName evidence="1">Adenylyl removase</fullName>
            <shortName evidence="1">AR</shortName>
            <shortName evidence="1">AT-N</shortName>
        </alternativeName>
    </domain>
    <domain>
        <recommendedName>
            <fullName evidence="1">Glutamine synthetase adenylyl transferase</fullName>
            <ecNumber evidence="1">2.7.7.42</ecNumber>
        </recommendedName>
        <alternativeName>
            <fullName evidence="1">Adenylyl transferase</fullName>
            <shortName evidence="1">AT</shortName>
            <shortName evidence="1">AT-C</shortName>
        </alternativeName>
    </domain>
</protein>
<accession>A7IL55</accession>
<feature type="chain" id="PRO_1000212990" description="Bifunctional glutamine synthetase adenylyltransferase/adenylyl-removing enzyme">
    <location>
        <begin position="1"/>
        <end position="989"/>
    </location>
</feature>
<feature type="region of interest" description="Adenylyl removase" evidence="1">
    <location>
        <begin position="1"/>
        <end position="473"/>
    </location>
</feature>
<feature type="region of interest" description="Adenylyl transferase" evidence="1">
    <location>
        <begin position="479"/>
        <end position="989"/>
    </location>
</feature>
<proteinExistence type="inferred from homology"/>
<evidence type="ECO:0000255" key="1">
    <source>
        <dbReference type="HAMAP-Rule" id="MF_00802"/>
    </source>
</evidence>
<keyword id="KW-0067">ATP-binding</keyword>
<keyword id="KW-0460">Magnesium</keyword>
<keyword id="KW-0511">Multifunctional enzyme</keyword>
<keyword id="KW-0547">Nucleotide-binding</keyword>
<keyword id="KW-0548">Nucleotidyltransferase</keyword>
<keyword id="KW-1185">Reference proteome</keyword>
<keyword id="KW-0808">Transferase</keyword>
<sequence>MRGPLEPDSADRPSLAILMREAPVLGDAETAEIKLSQATESLSPAERAALDGLLSRAPIARAVCLGMAEGSPFLLDLVRAEPTRLLRVLSDDPHAHLARLMADCAATAASGSEAEVMRALRRMRSEAALLIALADMGGAFDLIAVTAALTDVADAALRAALAFLLGDAARAGRLKPQDAADPAVGCGLAVIAMGKHGARELNYSSDIDLVVVFDREKAPLAEEVSAAPFFVKITQGLVRLLQERTADGYVLRVDLRLRPDPGSTAVALSTAAALDYYEREGATWERAAYIKARPVAGDLAVGRTFLAELSPFVWRRGLDFQAIADVHAMKREIHAFRGHDVVAVEGHNVKLGRGGIREVEFFVQTQQLIAGGRDPLLRNSRTLEALDALTAHRWIEPSVRDALAEAYVFLRRVEHRIQMVADAQTHSLPESRPAMEGFARFMGYPDRDAFAAALVTRLQTVQTHYANLFEDVAPPAVLDADLMFPPDENDRKTLAALSRLGFRDPAAASGMVRRWLSGGPRALKGESARAHLARIVPLMLEALARGGDPDGALAAADRFLSDLPGPQLLTALDRHPDLVRLLATILTAAPRLGETLARRPSLTDALLDPAFFDVLPDEAGLTAHLEHLLDTADTDEEQLDRARRFRQEQHVLIGVRIASGTLEAARAGEAYATLAEVIIRALHRRVWARFREAHGTIAGAQTAVLAMGKLGGREMTAGSDLDLIVLYDFDADADPTSDGARPLTGAQYFARFTQRLVTALTSLTNAGKLYDVDLRLRPSGRSGPVATRLASFATYQREEAWTWEHMALTRARVIAAEPEFGAKVRDVICAVMGQPRDPRRLAGDILDMRQSIAAEKGEGDMWNLKHAAGGQVDVEFLAQYLVLAHACAHPEIVDTATARVLATAARLGLLEPEDAHVLQRACRLYQNLTQVLRLAVDAHIVPADASPALRALLARAGEMPDFTTLDADLADTQAKVRTIFERILETAAE</sequence>
<reference key="1">
    <citation type="submission" date="2007-07" db="EMBL/GenBank/DDBJ databases">
        <title>Complete sequence of chromosome of Xanthobacter autotrophicus Py2.</title>
        <authorList>
            <consortium name="US DOE Joint Genome Institute"/>
            <person name="Copeland A."/>
            <person name="Lucas S."/>
            <person name="Lapidus A."/>
            <person name="Barry K."/>
            <person name="Glavina del Rio T."/>
            <person name="Hammon N."/>
            <person name="Israni S."/>
            <person name="Dalin E."/>
            <person name="Tice H."/>
            <person name="Pitluck S."/>
            <person name="Sims D."/>
            <person name="Brettin T."/>
            <person name="Bruce D."/>
            <person name="Detter J.C."/>
            <person name="Han C."/>
            <person name="Tapia R."/>
            <person name="Brainard J."/>
            <person name="Schmutz J."/>
            <person name="Larimer F."/>
            <person name="Land M."/>
            <person name="Hauser L."/>
            <person name="Kyrpides N."/>
            <person name="Kim E."/>
            <person name="Ensigns S.A."/>
            <person name="Richardson P."/>
        </authorList>
    </citation>
    <scope>NUCLEOTIDE SEQUENCE [LARGE SCALE GENOMIC DNA]</scope>
    <source>
        <strain>ATCC BAA-1158 / Py2</strain>
    </source>
</reference>
<name>GLNE_XANP2</name>
<gene>
    <name evidence="1" type="primary">glnE</name>
    <name type="ordered locus">Xaut_3519</name>
</gene>